<keyword id="KW-0274">FAD</keyword>
<keyword id="KW-0285">Flavoprotein</keyword>
<keyword id="KW-0560">Oxidoreductase</keyword>
<keyword id="KW-1185">Reference proteome</keyword>
<gene>
    <name evidence="1" type="primary">dadA</name>
    <name type="ordered locus">BCAN_B0943</name>
</gene>
<dbReference type="EC" id="1.4.99.-" evidence="1"/>
<dbReference type="EMBL" id="CP000873">
    <property type="protein sequence ID" value="ABX64091.1"/>
    <property type="molecule type" value="Genomic_DNA"/>
</dbReference>
<dbReference type="RefSeq" id="WP_004692165.1">
    <property type="nucleotide sequence ID" value="NC_010104.1"/>
</dbReference>
<dbReference type="SMR" id="A9MCK4"/>
<dbReference type="GeneID" id="55592556"/>
<dbReference type="KEGG" id="bcs:BCAN_B0943"/>
<dbReference type="HOGENOM" id="CLU_007884_9_2_5"/>
<dbReference type="PhylomeDB" id="A9MCK4"/>
<dbReference type="UniPathway" id="UPA00043">
    <property type="reaction ID" value="UER00498"/>
</dbReference>
<dbReference type="Proteomes" id="UP000001385">
    <property type="component" value="Chromosome II"/>
</dbReference>
<dbReference type="GO" id="GO:0005737">
    <property type="term" value="C:cytoplasm"/>
    <property type="evidence" value="ECO:0007669"/>
    <property type="project" value="TreeGrafter"/>
</dbReference>
<dbReference type="GO" id="GO:0005886">
    <property type="term" value="C:plasma membrane"/>
    <property type="evidence" value="ECO:0007669"/>
    <property type="project" value="TreeGrafter"/>
</dbReference>
<dbReference type="GO" id="GO:0008718">
    <property type="term" value="F:D-amino-acid dehydrogenase activity"/>
    <property type="evidence" value="ECO:0007669"/>
    <property type="project" value="UniProtKB-UniRule"/>
</dbReference>
<dbReference type="GO" id="GO:0055130">
    <property type="term" value="P:D-alanine catabolic process"/>
    <property type="evidence" value="ECO:0007669"/>
    <property type="project" value="UniProtKB-UniPathway"/>
</dbReference>
<dbReference type="FunFam" id="3.50.50.60:FF:000020">
    <property type="entry name" value="D-amino acid dehydrogenase"/>
    <property type="match status" value="1"/>
</dbReference>
<dbReference type="Gene3D" id="3.30.9.10">
    <property type="entry name" value="D-Amino Acid Oxidase, subunit A, domain 2"/>
    <property type="match status" value="1"/>
</dbReference>
<dbReference type="Gene3D" id="3.50.50.60">
    <property type="entry name" value="FAD/NAD(P)-binding domain"/>
    <property type="match status" value="2"/>
</dbReference>
<dbReference type="HAMAP" id="MF_01202">
    <property type="entry name" value="DadA"/>
    <property type="match status" value="1"/>
</dbReference>
<dbReference type="InterPro" id="IPR023080">
    <property type="entry name" value="DadA"/>
</dbReference>
<dbReference type="InterPro" id="IPR006076">
    <property type="entry name" value="FAD-dep_OxRdtase"/>
</dbReference>
<dbReference type="InterPro" id="IPR036188">
    <property type="entry name" value="FAD/NAD-bd_sf"/>
</dbReference>
<dbReference type="NCBIfam" id="NF001933">
    <property type="entry name" value="PRK00711.1"/>
    <property type="match status" value="1"/>
</dbReference>
<dbReference type="PANTHER" id="PTHR13847:SF280">
    <property type="entry name" value="D-AMINO ACID DEHYDROGENASE"/>
    <property type="match status" value="1"/>
</dbReference>
<dbReference type="PANTHER" id="PTHR13847">
    <property type="entry name" value="SARCOSINE DEHYDROGENASE-RELATED"/>
    <property type="match status" value="1"/>
</dbReference>
<dbReference type="Pfam" id="PF01266">
    <property type="entry name" value="DAO"/>
    <property type="match status" value="1"/>
</dbReference>
<dbReference type="SUPFAM" id="SSF54373">
    <property type="entry name" value="FAD-linked reductases, C-terminal domain"/>
    <property type="match status" value="1"/>
</dbReference>
<dbReference type="SUPFAM" id="SSF51905">
    <property type="entry name" value="FAD/NAD(P)-binding domain"/>
    <property type="match status" value="1"/>
</dbReference>
<feature type="chain" id="PRO_1000085510" description="D-amino acid dehydrogenase">
    <location>
        <begin position="1"/>
        <end position="416"/>
    </location>
</feature>
<feature type="binding site" evidence="1">
    <location>
        <begin position="3"/>
        <end position="17"/>
    </location>
    <ligand>
        <name>FAD</name>
        <dbReference type="ChEBI" id="CHEBI:57692"/>
    </ligand>
</feature>
<name>DADA_BRUC2</name>
<sequence length="416" mass="45124">MQITILGSGVIGVTTAYYLAKLGHEVTVIDREEGPAPETSFANAGQVSPGYASPWAAPSIPLKAAKWLFQKHAPLILRLTTDPVQYRWLLQMLANCTDSRYKINKTRMVRVAEYSRDCLIELRKDTGIEYDQRSQGTLQLFREQYQLDGIGKDIEVLRQDGVPFEVLDRDGCVNVEPALAHAKDKFVGGLRLPNDETGDCFKFTNALAKIAEGLGVKFRFGVNIKSLLMSGGKISGVETSEGIVTAERYVVALGSYTPALIKALGLNAPIYPVKGYSITAPIVDESRAPVSTVLDESYKIAITRLGDRIRVGGMAEVSGFTDDLPAARRATLDLSVTDLFPGGDLKAATFWSGLRPMTPDSTPIIGGTRYDNLFINAGHGTLGWTMACGSGRLLADLISGNKADIRADDLGIARYN</sequence>
<accession>A9MCK4</accession>
<organism>
    <name type="scientific">Brucella canis (strain ATCC 23365 / NCTC 10854 / RM-666)</name>
    <dbReference type="NCBI Taxonomy" id="483179"/>
    <lineage>
        <taxon>Bacteria</taxon>
        <taxon>Pseudomonadati</taxon>
        <taxon>Pseudomonadota</taxon>
        <taxon>Alphaproteobacteria</taxon>
        <taxon>Hyphomicrobiales</taxon>
        <taxon>Brucellaceae</taxon>
        <taxon>Brucella/Ochrobactrum group</taxon>
        <taxon>Brucella</taxon>
    </lineage>
</organism>
<protein>
    <recommendedName>
        <fullName evidence="1">D-amino acid dehydrogenase</fullName>
        <ecNumber evidence="1">1.4.99.-</ecNumber>
    </recommendedName>
</protein>
<comment type="function">
    <text evidence="1">Oxidative deamination of D-amino acids.</text>
</comment>
<comment type="catalytic activity">
    <reaction evidence="1">
        <text>a D-alpha-amino acid + A + H2O = a 2-oxocarboxylate + AH2 + NH4(+)</text>
        <dbReference type="Rhea" id="RHEA:18125"/>
        <dbReference type="ChEBI" id="CHEBI:13193"/>
        <dbReference type="ChEBI" id="CHEBI:15377"/>
        <dbReference type="ChEBI" id="CHEBI:17499"/>
        <dbReference type="ChEBI" id="CHEBI:28938"/>
        <dbReference type="ChEBI" id="CHEBI:35179"/>
        <dbReference type="ChEBI" id="CHEBI:59871"/>
    </reaction>
</comment>
<comment type="cofactor">
    <cofactor evidence="1">
        <name>FAD</name>
        <dbReference type="ChEBI" id="CHEBI:57692"/>
    </cofactor>
</comment>
<comment type="pathway">
    <text>Amino-acid degradation; D-alanine degradation; NH(3) and pyruvate from D-alanine: step 1/1.</text>
</comment>
<comment type="similarity">
    <text evidence="1">Belongs to the DadA oxidoreductase family.</text>
</comment>
<evidence type="ECO:0000255" key="1">
    <source>
        <dbReference type="HAMAP-Rule" id="MF_01202"/>
    </source>
</evidence>
<reference key="1">
    <citation type="submission" date="2007-10" db="EMBL/GenBank/DDBJ databases">
        <title>Brucella canis ATCC 23365 whole genome shotgun sequencing project.</title>
        <authorList>
            <person name="Setubal J.C."/>
            <person name="Bowns C."/>
            <person name="Boyle S."/>
            <person name="Crasta O.R."/>
            <person name="Czar M.J."/>
            <person name="Dharmanolla C."/>
            <person name="Gillespie J.J."/>
            <person name="Kenyon R.W."/>
            <person name="Lu J."/>
            <person name="Mane S."/>
            <person name="Mohapatra S."/>
            <person name="Nagrani S."/>
            <person name="Purkayastha A."/>
            <person name="Rajasimha H.K."/>
            <person name="Shallom J.M."/>
            <person name="Shallom S."/>
            <person name="Shukla M."/>
            <person name="Snyder E.E."/>
            <person name="Sobral B.W."/>
            <person name="Wattam A.R."/>
            <person name="Will R."/>
            <person name="Williams K."/>
            <person name="Yoo H."/>
            <person name="Bruce D."/>
            <person name="Detter C."/>
            <person name="Munk C."/>
            <person name="Brettin T.S."/>
        </authorList>
    </citation>
    <scope>NUCLEOTIDE SEQUENCE [LARGE SCALE GENOMIC DNA]</scope>
    <source>
        <strain>ATCC 23365 / NCTC 10854 / RM-666</strain>
    </source>
</reference>
<proteinExistence type="inferred from homology"/>